<sequence length="321" mass="36421">MTRPPLVRGIFSLGLSVAVLKGVEKTVRKHLERQGWIEPQKVDYELIFTIDRLKNLVDNKREALTAEQPDAGELSWRKVFNFISRQSSELDTRIYVLILLLSFLLPIAWTVLDGDRETTLEDKDNDCNVDLIENERRLKHYNDGERAVLQFGKNRSEPIILSYKDMNVLEGEHEFTSKEEHSNSHLTSKSENALNQVGSEDLLGCHLEKQLEEDKNEPNGEADGEDDNNREKDCSSSSEVESQSKCRKESTAEPDSLSRDTRTTSSLKSSTSFPISFKGSIDLKSLNQPSSLLHIQVSPTKSSNLDAQVNTEQAYSQPFRY</sequence>
<organism>
    <name type="scientific">Saccharomyces cerevisiae (strain ATCC 204508 / S288c)</name>
    <name type="common">Baker's yeast</name>
    <dbReference type="NCBI Taxonomy" id="559292"/>
    <lineage>
        <taxon>Eukaryota</taxon>
        <taxon>Fungi</taxon>
        <taxon>Dikarya</taxon>
        <taxon>Ascomycota</taxon>
        <taxon>Saccharomycotina</taxon>
        <taxon>Saccharomycetes</taxon>
        <taxon>Saccharomycetales</taxon>
        <taxon>Saccharomycetaceae</taxon>
        <taxon>Saccharomyces</taxon>
    </lineage>
</organism>
<evidence type="ECO:0000255" key="1"/>
<evidence type="ECO:0000256" key="2">
    <source>
        <dbReference type="SAM" id="MobiDB-lite"/>
    </source>
</evidence>
<evidence type="ECO:0000269" key="3">
    <source>
    </source>
</evidence>
<evidence type="ECO:0000269" key="4">
    <source>
    </source>
</evidence>
<evidence type="ECO:0000269" key="5">
    <source>
    </source>
</evidence>
<evidence type="ECO:0000269" key="6">
    <source>
    </source>
</evidence>
<evidence type="ECO:0000269" key="7">
    <source>
    </source>
</evidence>
<evidence type="ECO:0000269" key="8">
    <source>
    </source>
</evidence>
<evidence type="ECO:0000269" key="9">
    <source>
    </source>
</evidence>
<evidence type="ECO:0000269" key="10">
    <source>
    </source>
</evidence>
<evidence type="ECO:0000269" key="11">
    <source>
    </source>
</evidence>
<evidence type="ECO:0007744" key="12">
    <source>
        <dbReference type="PDB" id="5H2C"/>
    </source>
</evidence>
<evidence type="ECO:0007744" key="13">
    <source>
        <dbReference type="PDB" id="5XJG"/>
    </source>
</evidence>
<evidence type="ECO:0007744" key="14">
    <source>
    </source>
</evidence>
<evidence type="ECO:0007744" key="15">
    <source>
    </source>
</evidence>
<evidence type="ECO:0007744" key="16">
    <source>
    </source>
</evidence>
<keyword id="KW-0002">3D-structure</keyword>
<keyword id="KW-0072">Autophagy</keyword>
<keyword id="KW-0472">Membrane</keyword>
<keyword id="KW-0539">Nucleus</keyword>
<keyword id="KW-0597">Phosphoprotein</keyword>
<keyword id="KW-1185">Reference proteome</keyword>
<keyword id="KW-0732">Signal</keyword>
<keyword id="KW-0812">Transmembrane</keyword>
<keyword id="KW-1133">Transmembrane helix</keyword>
<feature type="signal peptide" evidence="1">
    <location>
        <begin position="1"/>
        <end position="22"/>
    </location>
</feature>
<feature type="chain" id="PRO_0000202937" description="Nucleus-vacuole junction protein 1">
    <location>
        <begin position="23"/>
        <end position="321"/>
    </location>
</feature>
<feature type="transmembrane region" description="Helical" evidence="1">
    <location>
        <begin position="94"/>
        <end position="114"/>
    </location>
</feature>
<feature type="region of interest" description="TSC13-binding">
    <location>
        <begin position="73"/>
        <end position="125"/>
    </location>
</feature>
<feature type="region of interest" description="OSH1-binding">
    <location>
        <begin position="139"/>
        <end position="195"/>
    </location>
</feature>
<feature type="region of interest" description="Disordered" evidence="2">
    <location>
        <begin position="211"/>
        <end position="275"/>
    </location>
</feature>
<feature type="region of interest" description="VAC8-binding">
    <location>
        <begin position="233"/>
        <end position="321"/>
    </location>
</feature>
<feature type="region of interest" description="Disordered" evidence="2">
    <location>
        <begin position="299"/>
        <end position="321"/>
    </location>
</feature>
<feature type="compositionally biased region" description="Basic and acidic residues" evidence="2">
    <location>
        <begin position="242"/>
        <end position="262"/>
    </location>
</feature>
<feature type="compositionally biased region" description="Low complexity" evidence="2">
    <location>
        <begin position="263"/>
        <end position="272"/>
    </location>
</feature>
<feature type="modified residue" description="Phosphoserine" evidence="14 15">
    <location>
        <position position="156"/>
    </location>
</feature>
<feature type="modified residue" description="Phosphoserine" evidence="15">
    <location>
        <position position="199"/>
    </location>
</feature>
<feature type="modified residue" description="Phosphoserine" evidence="15 16">
    <location>
        <position position="285"/>
    </location>
</feature>
<feature type="modified residue" description="Phosphoserine" evidence="16">
    <location>
        <position position="298"/>
    </location>
</feature>
<proteinExistence type="evidence at protein level"/>
<protein>
    <recommendedName>
        <fullName>Nucleus-vacuole junction protein 1</fullName>
    </recommendedName>
</protein>
<name>NVJ1_YEAST</name>
<dbReference type="EMBL" id="U00030">
    <property type="protein sequence ID" value="AAB68357.1"/>
    <property type="molecule type" value="Genomic_DNA"/>
</dbReference>
<dbReference type="EMBL" id="BK006934">
    <property type="protein sequence ID" value="DAA06887.1"/>
    <property type="molecule type" value="Genomic_DNA"/>
</dbReference>
<dbReference type="PIR" id="S46679">
    <property type="entry name" value="S46679"/>
</dbReference>
<dbReference type="RefSeq" id="NP_012065.3">
    <property type="nucleotide sequence ID" value="NM_001179326.3"/>
</dbReference>
<dbReference type="PDB" id="5H2C">
    <property type="method" value="X-ray"/>
    <property type="resolution" value="3.51 A"/>
    <property type="chains" value="B=139-165"/>
</dbReference>
<dbReference type="PDB" id="5XJG">
    <property type="method" value="X-ray"/>
    <property type="resolution" value="2.40 A"/>
    <property type="chains" value="B/D=229-321"/>
</dbReference>
<dbReference type="PDBsum" id="5H2C"/>
<dbReference type="PDBsum" id="5XJG"/>
<dbReference type="SMR" id="P38881"/>
<dbReference type="BioGRID" id="36629">
    <property type="interactions" value="84"/>
</dbReference>
<dbReference type="ComplexPortal" id="CPX-1381">
    <property type="entry name" value="NVJ1-VAC8 nucleus-vacuole junction complex"/>
</dbReference>
<dbReference type="DIP" id="DIP-4215N"/>
<dbReference type="FunCoup" id="P38881">
    <property type="interactions" value="37"/>
</dbReference>
<dbReference type="IntAct" id="P38881">
    <property type="interactions" value="4"/>
</dbReference>
<dbReference type="STRING" id="4932.YHR195W"/>
<dbReference type="iPTMnet" id="P38881"/>
<dbReference type="PaxDb" id="4932-YHR195W"/>
<dbReference type="PeptideAtlas" id="P38881"/>
<dbReference type="EnsemblFungi" id="YHR195W_mRNA">
    <property type="protein sequence ID" value="YHR195W"/>
    <property type="gene ID" value="YHR195W"/>
</dbReference>
<dbReference type="GeneID" id="856602"/>
<dbReference type="KEGG" id="sce:YHR195W"/>
<dbReference type="AGR" id="SGD:S000001238"/>
<dbReference type="SGD" id="S000001238">
    <property type="gene designation" value="NVJ1"/>
</dbReference>
<dbReference type="VEuPathDB" id="FungiDB:YHR195W"/>
<dbReference type="eggNOG" id="ENOG502S8G9">
    <property type="taxonomic scope" value="Eukaryota"/>
</dbReference>
<dbReference type="HOGENOM" id="CLU_869201_0_0_1"/>
<dbReference type="InParanoid" id="P38881"/>
<dbReference type="OMA" id="EDNDIHP"/>
<dbReference type="OrthoDB" id="4053752at2759"/>
<dbReference type="BioCyc" id="YEAST:G3O-31223-MONOMER"/>
<dbReference type="BioGRID-ORCS" id="856602">
    <property type="hits" value="0 hits in 10 CRISPR screens"/>
</dbReference>
<dbReference type="PRO" id="PR:P38881"/>
<dbReference type="Proteomes" id="UP000002311">
    <property type="component" value="Chromosome VIII"/>
</dbReference>
<dbReference type="RNAct" id="P38881">
    <property type="molecule type" value="protein"/>
</dbReference>
<dbReference type="GO" id="GO:0016020">
    <property type="term" value="C:membrane"/>
    <property type="evidence" value="ECO:0000314"/>
    <property type="project" value="SGD"/>
</dbReference>
<dbReference type="GO" id="GO:0005635">
    <property type="term" value="C:nuclear envelope"/>
    <property type="evidence" value="ECO:0000314"/>
    <property type="project" value="SGD"/>
</dbReference>
<dbReference type="GO" id="GO:0005640">
    <property type="term" value="C:nuclear outer membrane"/>
    <property type="evidence" value="ECO:0000303"/>
    <property type="project" value="ComplexPortal"/>
</dbReference>
<dbReference type="GO" id="GO:0034399">
    <property type="term" value="C:nuclear periphery"/>
    <property type="evidence" value="ECO:0007005"/>
    <property type="project" value="SGD"/>
</dbReference>
<dbReference type="GO" id="GO:0071561">
    <property type="term" value="C:nucleus-vacuole junction"/>
    <property type="evidence" value="ECO:0000314"/>
    <property type="project" value="SGD"/>
</dbReference>
<dbReference type="GO" id="GO:0005198">
    <property type="term" value="F:structural molecule activity"/>
    <property type="evidence" value="ECO:0000314"/>
    <property type="project" value="SGD"/>
</dbReference>
<dbReference type="GO" id="GO:0006629">
    <property type="term" value="P:lipid metabolic process"/>
    <property type="evidence" value="ECO:0000303"/>
    <property type="project" value="ComplexPortal"/>
</dbReference>
<dbReference type="GO" id="GO:0071562">
    <property type="term" value="P:nucleus-vacuole junction assembly"/>
    <property type="evidence" value="ECO:0000314"/>
    <property type="project" value="SGD"/>
</dbReference>
<dbReference type="GO" id="GO:0034727">
    <property type="term" value="P:piecemeal microautophagy of the nucleus"/>
    <property type="evidence" value="ECO:0000315"/>
    <property type="project" value="SGD"/>
</dbReference>
<dbReference type="GO" id="GO:0008104">
    <property type="term" value="P:protein localization"/>
    <property type="evidence" value="ECO:0000315"/>
    <property type="project" value="SGD"/>
</dbReference>
<gene>
    <name type="primary">NVJ1</name>
    <name type="synonym">VAB36</name>
    <name type="ordered locus">YHR195W</name>
</gene>
<reference key="1">
    <citation type="journal article" date="1994" name="Science">
        <title>Complete nucleotide sequence of Saccharomyces cerevisiae chromosome VIII.</title>
        <authorList>
            <person name="Johnston M."/>
            <person name="Andrews S."/>
            <person name="Brinkman R."/>
            <person name="Cooper J."/>
            <person name="Ding H."/>
            <person name="Dover J."/>
            <person name="Du Z."/>
            <person name="Favello A."/>
            <person name="Fulton L."/>
            <person name="Gattung S."/>
            <person name="Geisel C."/>
            <person name="Kirsten J."/>
            <person name="Kucaba T."/>
            <person name="Hillier L.W."/>
            <person name="Jier M."/>
            <person name="Johnston L."/>
            <person name="Langston Y."/>
            <person name="Latreille P."/>
            <person name="Louis E.J."/>
            <person name="Macri C."/>
            <person name="Mardis E."/>
            <person name="Menezes S."/>
            <person name="Mouser L."/>
            <person name="Nhan M."/>
            <person name="Rifkin L."/>
            <person name="Riles L."/>
            <person name="St Peter H."/>
            <person name="Trevaskis E."/>
            <person name="Vaughan K."/>
            <person name="Vignati D."/>
            <person name="Wilcox L."/>
            <person name="Wohldman P."/>
            <person name="Waterston R."/>
            <person name="Wilson R."/>
            <person name="Vaudin M."/>
        </authorList>
    </citation>
    <scope>NUCLEOTIDE SEQUENCE [LARGE SCALE GENOMIC DNA]</scope>
    <source>
        <strain>ATCC 204508 / S288c</strain>
    </source>
</reference>
<reference key="2">
    <citation type="journal article" date="2014" name="G3 (Bethesda)">
        <title>The reference genome sequence of Saccharomyces cerevisiae: Then and now.</title>
        <authorList>
            <person name="Engel S.R."/>
            <person name="Dietrich F.S."/>
            <person name="Fisk D.G."/>
            <person name="Binkley G."/>
            <person name="Balakrishnan R."/>
            <person name="Costanzo M.C."/>
            <person name="Dwight S.S."/>
            <person name="Hitz B.C."/>
            <person name="Karra K."/>
            <person name="Nash R.S."/>
            <person name="Weng S."/>
            <person name="Wong E.D."/>
            <person name="Lloyd P."/>
            <person name="Skrzypek M.S."/>
            <person name="Miyasato S.R."/>
            <person name="Simison M."/>
            <person name="Cherry J.M."/>
        </authorList>
    </citation>
    <scope>GENOME REANNOTATION</scope>
    <source>
        <strain>ATCC 204508 / S288c</strain>
    </source>
</reference>
<reference key="3">
    <citation type="journal article" date="2000" name="Mol. Biol. Cell">
        <title>Nucleus-vacuole junctions in Saccharomyces cerevisiae are formed through the direct interaction of Vac8p with Nvj1p.</title>
        <authorList>
            <person name="Pan X."/>
            <person name="Roberts P."/>
            <person name="Chen Y."/>
            <person name="Kvam E."/>
            <person name="Shulga N."/>
            <person name="Huang K."/>
            <person name="Lemmon S."/>
            <person name="Goldfarb D.S."/>
        </authorList>
    </citation>
    <scope>INTERACTION WITH VAC8</scope>
    <scope>SUBCELLULAR LOCATION</scope>
    <scope>FUNCTION</scope>
</reference>
<reference key="4">
    <citation type="journal article" date="2003" name="Mol. Biol. Cell">
        <title>Piecemeal microautophagy of nucleus in Saccharomyces cerevisiae.</title>
        <authorList>
            <person name="Roberts P."/>
            <person name="Moshitch-Moshkovitz S."/>
            <person name="Kvam E."/>
            <person name="O'Toole E."/>
            <person name="Winey M."/>
            <person name="Goldfarb D.S."/>
        </authorList>
    </citation>
    <scope>FUNCTION</scope>
</reference>
<reference key="5">
    <citation type="journal article" date="2003" name="Nature">
        <title>Global analysis of protein localization in budding yeast.</title>
        <authorList>
            <person name="Huh W.-K."/>
            <person name="Falvo J.V."/>
            <person name="Gerke L.C."/>
            <person name="Carroll A.S."/>
            <person name="Howson R.W."/>
            <person name="Weissman J.S."/>
            <person name="O'Shea E.K."/>
        </authorList>
    </citation>
    <scope>SUBCELLULAR LOCATION [LARGE SCALE ANALYSIS]</scope>
</reference>
<reference key="6">
    <citation type="journal article" date="2003" name="Nature">
        <title>Global analysis of protein expression in yeast.</title>
        <authorList>
            <person name="Ghaemmaghami S."/>
            <person name="Huh W.-K."/>
            <person name="Bower K."/>
            <person name="Howson R.W."/>
            <person name="Belle A."/>
            <person name="Dephoure N."/>
            <person name="O'Shea E.K."/>
            <person name="Weissman J.S."/>
        </authorList>
    </citation>
    <scope>LEVEL OF PROTEIN EXPRESSION [LARGE SCALE ANALYSIS]</scope>
</reference>
<reference key="7">
    <citation type="journal article" date="2004" name="J. Cell Sci.">
        <title>Nvj1p is the outer-nuclear-membrane receptor for oxysterol-binding protein homolog Osh1p in Saccharomyces cerevisiae.</title>
        <authorList>
            <person name="Kvam E."/>
            <person name="Goldfarb D.S."/>
        </authorList>
    </citation>
    <scope>INTERACTION WITH OSH1</scope>
    <scope>SUBCELLULAR LOCATION</scope>
    <scope>FUNCTION</scope>
</reference>
<reference key="8">
    <citation type="journal article" date="2005" name="Mol. Biol. Cell">
        <title>Targeting of Tsc13p to nucleus-vacuole junctions: a role for very-long-chain fatty acids in the biogenesis of microautophagic vesicles.</title>
        <authorList>
            <person name="Kvam E."/>
            <person name="Gable K."/>
            <person name="Dunn T.M."/>
            <person name="Goldfarb D.S."/>
        </authorList>
    </citation>
    <scope>INTERACTION WITH TSC13</scope>
    <scope>FUNCTION</scope>
</reference>
<reference key="9">
    <citation type="journal article" date="2006" name="J. Cell Sci.">
        <title>Structure and function of nucleus-vacuole junctions: outer-nuclear-membrane targeting of Nvj1p and a role in tryptophan uptake.</title>
        <authorList>
            <person name="Kvam E."/>
            <person name="Goldfarb D.S."/>
        </authorList>
    </citation>
    <scope>FUNCTION</scope>
    <scope>DOMAINS</scope>
    <scope>SUBCELLULAR LOCATION</scope>
    <scope>INTERACTION WITH OSH1; TSC13 AND VAC8</scope>
</reference>
<reference key="10">
    <citation type="journal article" date="2007" name="J. Proteome Res.">
        <title>Large-scale phosphorylation analysis of alpha-factor-arrested Saccharomyces cerevisiae.</title>
        <authorList>
            <person name="Li X."/>
            <person name="Gerber S.A."/>
            <person name="Rudner A.D."/>
            <person name="Beausoleil S.A."/>
            <person name="Haas W."/>
            <person name="Villen J."/>
            <person name="Elias J.E."/>
            <person name="Gygi S.P."/>
        </authorList>
    </citation>
    <scope>PHOSPHORYLATION [LARGE SCALE ANALYSIS] AT SER-156</scope>
    <scope>IDENTIFICATION BY MASS SPECTROMETRY [LARGE SCALE ANALYSIS]</scope>
    <source>
        <strain>ADR376</strain>
    </source>
</reference>
<reference key="11">
    <citation type="journal article" date="2008" name="Mol. Cell. Proteomics">
        <title>A multidimensional chromatography technology for in-depth phosphoproteome analysis.</title>
        <authorList>
            <person name="Albuquerque C.P."/>
            <person name="Smolka M.B."/>
            <person name="Payne S.H."/>
            <person name="Bafna V."/>
            <person name="Eng J."/>
            <person name="Zhou H."/>
        </authorList>
    </citation>
    <scope>PHOSPHORYLATION [LARGE SCALE ANALYSIS] AT SER-156; SER-199 AND SER-285</scope>
    <scope>IDENTIFICATION BY MASS SPECTROMETRY [LARGE SCALE ANALYSIS]</scope>
</reference>
<reference key="12">
    <citation type="journal article" date="2009" name="Science">
        <title>Global analysis of Cdk1 substrate phosphorylation sites provides insights into evolution.</title>
        <authorList>
            <person name="Holt L.J."/>
            <person name="Tuch B.B."/>
            <person name="Villen J."/>
            <person name="Johnson A.D."/>
            <person name="Gygi S.P."/>
            <person name="Morgan D.O."/>
        </authorList>
    </citation>
    <scope>PHOSPHORYLATION [LARGE SCALE ANALYSIS] AT SER-285 AND SER-298</scope>
    <scope>IDENTIFICATION BY MASS SPECTROMETRY [LARGE SCALE ANALYSIS]</scope>
</reference>
<reference evidence="13" key="13">
    <citation type="journal article" date="2017" name="Proc. Natl. Acad. Sci. U.S.A.">
        <title>Mechanistic insight into the nucleus-vacuole junction based on the Vac8p-Nvj1p crystal structure.</title>
        <authorList>
            <person name="Jeong H."/>
            <person name="Park J."/>
            <person name="Kim H.I."/>
            <person name="Lee M."/>
            <person name="Ko Y.J."/>
            <person name="Lee S."/>
            <person name="Jun Y."/>
            <person name="Lee C."/>
        </authorList>
    </citation>
    <scope>X-RAY CRYSTALLOGRAPHY (2.40 ANGSTROMS) OF 229-321 IN COMPLEX WITH VAC8</scope>
    <scope>FUNCTION</scope>
    <scope>DOMAIN</scope>
    <scope>INTERACTION WITH VAC8</scope>
</reference>
<reference evidence="12" key="14">
    <citation type="journal article" date="2017" name="Structure">
        <title>Structure of yeast OSBP-related protein Osh1 reveals key determinants for lipid transport and protein targeting at the nucleus-vacuole junction.</title>
        <authorList>
            <person name="Manik M.K."/>
            <person name="Yang H."/>
            <person name="Tong J."/>
            <person name="Im Y.J."/>
        </authorList>
    </citation>
    <scope>X-RAY CRYSTALLOGRAPHY (3.51 ANGSTROMS) OF 139-165 IN COMPLEX WITH OSH1</scope>
    <scope>FUNCTION</scope>
    <scope>INTERACTION WITH OSH1</scope>
</reference>
<accession>P38881</accession>
<accession>D3DLE3</accession>
<comment type="function">
    <text evidence="3 4 7 8 9 10 11">Involved in the formation of nucleus-vacuole junctions (NVJs) during piecemeal microautophagy of the nucleus (PMN) (PubMed:10888680, PubMed:12529432, PubMed:16912077). NVJs are interorganelle interfaces mediated by NVJ1 in the nuclear envelope and VAC8 on the vacuole membrane (PubMed:10888680, PubMed:12529432, PubMed:16912077). Together, NVJ1 and VAC8 form Velcro-like patches through which teardrop-like portions of the nucleus are pinched off into the vacuolar lumen and degraded by the PMN process (PubMed:10888680, PubMed:12529432, PubMed:16912077, PubMed:28533415). Also acts as an outer-nuclear membrane receptor for OSH1 and TSC13 (PubMed:15367582, PubMed:15958487, PubMed:16912077, PubMed:28319008).</text>
</comment>
<comment type="subunit">
    <text evidence="3 4 7 8 9 11">Interacts with OSH1, TSC13 and VAC8.</text>
</comment>
<comment type="interaction">
    <interactant intactId="EBI-24885">
        <id>P38881</id>
    </interactant>
    <interactant intactId="EBI-20212">
        <id>P39968</id>
        <label>VAC8</label>
    </interactant>
    <organismsDiffer>false</organismsDiffer>
    <experiments>10</experiments>
</comment>
<comment type="subcellular location">
    <subcellularLocation>
        <location evidence="3 5 7 9">Nucleus outer membrane</location>
        <topology evidence="3 5 7 9">Single-pass membrane protein</topology>
    </subcellularLocation>
</comment>
<comment type="domain">
    <text evidence="11">The extended 80 Angstroms-longloop of NVJ1 specifically binds the highly conserved innergroove formed by the armadillo repeats of VAC8.</text>
</comment>
<comment type="miscellaneous">
    <text evidence="6">Present with 1900 molecules/cell in log phase SD medium.</text>
</comment>